<name>CKLF7_MOUSE</name>
<sequence length="167" mass="18105">MSHGSGLVRTTCSSGGALGPGQPSEGLLDRVYPLTHGALFKVAQMVTLLIAFICVRSSVPIDYGAHSFFEVVTMCDLIMILIFYLVHLFRFYRVLTCISWPLSELLHYLIGTLLLLIASIVIASKSYNQSGLVAGAIFGFLASFLCLASLWLSYKITCITQSSDASA</sequence>
<evidence type="ECO:0000255" key="1"/>
<evidence type="ECO:0000255" key="2">
    <source>
        <dbReference type="PROSITE-ProRule" id="PRU00581"/>
    </source>
</evidence>
<evidence type="ECO:0000303" key="3">
    <source>
    </source>
</evidence>
<evidence type="ECO:0000305" key="4"/>
<protein>
    <recommendedName>
        <fullName>CKLF-like MARVEL transmembrane domain-containing protein 7</fullName>
    </recommendedName>
    <alternativeName>
        <fullName>Chemokine-like factor superfamily member 7</fullName>
    </alternativeName>
    <alternativeName>
        <fullName>LNV</fullName>
    </alternativeName>
</protein>
<organism>
    <name type="scientific">Mus musculus</name>
    <name type="common">Mouse</name>
    <dbReference type="NCBI Taxonomy" id="10090"/>
    <lineage>
        <taxon>Eukaryota</taxon>
        <taxon>Metazoa</taxon>
        <taxon>Chordata</taxon>
        <taxon>Craniata</taxon>
        <taxon>Vertebrata</taxon>
        <taxon>Euteleostomi</taxon>
        <taxon>Mammalia</taxon>
        <taxon>Eutheria</taxon>
        <taxon>Euarchontoglires</taxon>
        <taxon>Glires</taxon>
        <taxon>Rodentia</taxon>
        <taxon>Myomorpha</taxon>
        <taxon>Muroidea</taxon>
        <taxon>Muridae</taxon>
        <taxon>Murinae</taxon>
        <taxon>Mus</taxon>
        <taxon>Mus</taxon>
    </lineage>
</organism>
<gene>
    <name type="primary">Cmtm7</name>
    <name type="synonym">Cklfsf7</name>
    <name type="synonym">Lnv</name>
</gene>
<accession>Q9ESD6</accession>
<accession>Q8CHW2</accession>
<comment type="subcellular location">
    <subcellularLocation>
        <location>Membrane</location>
        <topology>Multi-pass membrane protein</topology>
    </subcellularLocation>
</comment>
<comment type="alternative products">
    <event type="alternative splicing"/>
    <isoform>
        <id>Q9ESD6-1</id>
        <name>1</name>
        <sequence type="displayed"/>
    </isoform>
    <isoform>
        <id>Q9ESD6-2</id>
        <name>2</name>
        <sequence type="described" ref="VSP_008267"/>
    </isoform>
</comment>
<comment type="similarity">
    <text evidence="4">Belongs to the chemokine-like factor family.</text>
</comment>
<keyword id="KW-0025">Alternative splicing</keyword>
<keyword id="KW-0145">Chemotaxis</keyword>
<keyword id="KW-0202">Cytokine</keyword>
<keyword id="KW-0472">Membrane</keyword>
<keyword id="KW-1185">Reference proteome</keyword>
<keyword id="KW-0812">Transmembrane</keyword>
<keyword id="KW-1133">Transmembrane helix</keyword>
<reference key="1">
    <citation type="submission" date="1999-09" db="EMBL/GenBank/DDBJ databases">
        <title>Cloning and characterization of a novel gene Lnv that is LPS-responsive in B cells and associated with the nuclear membrane and vesicles.</title>
        <authorList>
            <person name="Wang J.W."/>
            <person name="Tu Z."/>
            <person name="Kerr W.G."/>
        </authorList>
    </citation>
    <scope>NUCLEOTIDE SEQUENCE [MRNA] (ISOFORM 1)</scope>
</reference>
<reference key="2">
    <citation type="submission" date="2003-02" db="EMBL/GenBank/DDBJ databases">
        <authorList>
            <person name="Han W."/>
            <person name="Li T."/>
            <person name="Tan Y."/>
            <person name="Shi S."/>
            <person name="Ding P."/>
            <person name="Ma D."/>
        </authorList>
    </citation>
    <scope>NUCLEOTIDE SEQUENCE [MRNA] (ISOFORM 1)</scope>
    <source>
        <tissue>Thymus</tissue>
    </source>
</reference>
<reference key="3">
    <citation type="journal article" date="2004" name="Genome Res.">
        <title>The status, quality, and expansion of the NIH full-length cDNA project: the Mammalian Gene Collection (MGC).</title>
        <authorList>
            <consortium name="The MGC Project Team"/>
        </authorList>
    </citation>
    <scope>NUCLEOTIDE SEQUENCE [LARGE SCALE MRNA] (ISOFORM 2)</scope>
    <source>
        <strain>C57BL/6J</strain>
        <tissue>Mammary gland</tissue>
    </source>
</reference>
<reference key="4">
    <citation type="journal article" date="2010" name="Cell">
        <title>A tissue-specific atlas of mouse protein phosphorylation and expression.</title>
        <authorList>
            <person name="Huttlin E.L."/>
            <person name="Jedrychowski M.P."/>
            <person name="Elias J.E."/>
            <person name="Goswami T."/>
            <person name="Rad R."/>
            <person name="Beausoleil S.A."/>
            <person name="Villen J."/>
            <person name="Haas W."/>
            <person name="Sowa M.E."/>
            <person name="Gygi S.P."/>
        </authorList>
    </citation>
    <scope>IDENTIFICATION BY MASS SPECTROMETRY [LARGE SCALE ANALYSIS]</scope>
    <source>
        <tissue>Heart</tissue>
        <tissue>Kidney</tissue>
        <tissue>Spleen</tissue>
    </source>
</reference>
<proteinExistence type="evidence at protein level"/>
<dbReference type="EMBL" id="AF188504">
    <property type="protein sequence ID" value="AAG15398.1"/>
    <property type="molecule type" value="mRNA"/>
</dbReference>
<dbReference type="EMBL" id="AY241869">
    <property type="protein sequence ID" value="AAP33491.1"/>
    <property type="molecule type" value="mRNA"/>
</dbReference>
<dbReference type="EMBL" id="BC038633">
    <property type="protein sequence ID" value="AAH38633.1"/>
    <property type="molecule type" value="mRNA"/>
</dbReference>
<dbReference type="CCDS" id="CCDS57709.1">
    <molecule id="Q9ESD6-2"/>
</dbReference>
<dbReference type="CCDS" id="CCDS57710.1">
    <molecule id="Q9ESD6-1"/>
</dbReference>
<dbReference type="RefSeq" id="NP_001239408.1">
    <molecule id="Q9ESD6-2"/>
    <property type="nucleotide sequence ID" value="NM_001252479.1"/>
</dbReference>
<dbReference type="RefSeq" id="NP_598739.1">
    <molecule id="Q9ESD6-1"/>
    <property type="nucleotide sequence ID" value="NM_133978.2"/>
</dbReference>
<dbReference type="SMR" id="Q9ESD6"/>
<dbReference type="BioGRID" id="221896">
    <property type="interactions" value="2"/>
</dbReference>
<dbReference type="FunCoup" id="Q9ESD6">
    <property type="interactions" value="147"/>
</dbReference>
<dbReference type="STRING" id="10090.ENSMUSP00000035009"/>
<dbReference type="iPTMnet" id="Q9ESD6"/>
<dbReference type="PhosphoSitePlus" id="Q9ESD6"/>
<dbReference type="SwissPalm" id="Q9ESD6"/>
<dbReference type="PaxDb" id="10090-ENSMUSP00000035009"/>
<dbReference type="ProteomicsDB" id="283509">
    <molecule id="Q9ESD6-1"/>
</dbReference>
<dbReference type="ProteomicsDB" id="283510">
    <molecule id="Q9ESD6-2"/>
</dbReference>
<dbReference type="Pumba" id="Q9ESD6"/>
<dbReference type="Antibodypedia" id="27737">
    <property type="antibodies" value="133 antibodies from 22 providers"/>
</dbReference>
<dbReference type="DNASU" id="102545"/>
<dbReference type="Ensembl" id="ENSMUST00000035009.16">
    <molecule id="Q9ESD6-1"/>
    <property type="protein sequence ID" value="ENSMUSP00000035009.9"/>
    <property type="gene ID" value="ENSMUSG00000032436.18"/>
</dbReference>
<dbReference type="Ensembl" id="ENSMUST00000084867.9">
    <molecule id="Q9ESD6-2"/>
    <property type="protein sequence ID" value="ENSMUSP00000081927.8"/>
    <property type="gene ID" value="ENSMUSG00000032436.18"/>
</dbReference>
<dbReference type="GeneID" id="102545"/>
<dbReference type="KEGG" id="mmu:102545"/>
<dbReference type="UCSC" id="uc009ryc.2">
    <molecule id="Q9ESD6-1"/>
    <property type="organism name" value="mouse"/>
</dbReference>
<dbReference type="UCSC" id="uc009ryd.2">
    <molecule id="Q9ESD6-2"/>
    <property type="organism name" value="mouse"/>
</dbReference>
<dbReference type="AGR" id="MGI:2447166"/>
<dbReference type="CTD" id="112616"/>
<dbReference type="MGI" id="MGI:2447166">
    <property type="gene designation" value="Cmtm7"/>
</dbReference>
<dbReference type="VEuPathDB" id="HostDB:ENSMUSG00000032436"/>
<dbReference type="eggNOG" id="KOG4788">
    <property type="taxonomic scope" value="Eukaryota"/>
</dbReference>
<dbReference type="GeneTree" id="ENSGT00510000048725"/>
<dbReference type="HOGENOM" id="CLU_127424_0_0_1"/>
<dbReference type="InParanoid" id="Q9ESD6"/>
<dbReference type="OMA" id="TEFFHYA"/>
<dbReference type="OrthoDB" id="5982489at2759"/>
<dbReference type="PhylomeDB" id="Q9ESD6"/>
<dbReference type="TreeFam" id="TF317387"/>
<dbReference type="BioGRID-ORCS" id="102545">
    <property type="hits" value="1 hit in 77 CRISPR screens"/>
</dbReference>
<dbReference type="ChiTaRS" id="Cmtm7">
    <property type="organism name" value="mouse"/>
</dbReference>
<dbReference type="PRO" id="PR:Q9ESD6"/>
<dbReference type="Proteomes" id="UP000000589">
    <property type="component" value="Chromosome 9"/>
</dbReference>
<dbReference type="RNAct" id="Q9ESD6">
    <property type="molecule type" value="protein"/>
</dbReference>
<dbReference type="Bgee" id="ENSMUSG00000032436">
    <property type="expression patterns" value="Expressed in granulocyte and 208 other cell types or tissues"/>
</dbReference>
<dbReference type="ExpressionAtlas" id="Q9ESD6">
    <property type="expression patterns" value="baseline and differential"/>
</dbReference>
<dbReference type="GO" id="GO:0005615">
    <property type="term" value="C:extracellular space"/>
    <property type="evidence" value="ECO:0007669"/>
    <property type="project" value="UniProtKB-KW"/>
</dbReference>
<dbReference type="GO" id="GO:0016020">
    <property type="term" value="C:membrane"/>
    <property type="evidence" value="ECO:0007669"/>
    <property type="project" value="UniProtKB-SubCell"/>
</dbReference>
<dbReference type="GO" id="GO:0005125">
    <property type="term" value="F:cytokine activity"/>
    <property type="evidence" value="ECO:0007669"/>
    <property type="project" value="UniProtKB-KW"/>
</dbReference>
<dbReference type="GO" id="GO:0002337">
    <property type="term" value="P:B-1a B cell differentiation"/>
    <property type="evidence" value="ECO:0000315"/>
    <property type="project" value="MGI"/>
</dbReference>
<dbReference type="GO" id="GO:0006935">
    <property type="term" value="P:chemotaxis"/>
    <property type="evidence" value="ECO:0007669"/>
    <property type="project" value="UniProtKB-KW"/>
</dbReference>
<dbReference type="InterPro" id="IPR008253">
    <property type="entry name" value="Marvel"/>
</dbReference>
<dbReference type="InterPro" id="IPR050578">
    <property type="entry name" value="MARVEL-CKLF_proteins"/>
</dbReference>
<dbReference type="PANTHER" id="PTHR22776:SF89">
    <property type="entry name" value="CKLF-LIKE MARVEL TRANSMEMBRANE DOMAIN-CONTAINING PROTEIN 7"/>
    <property type="match status" value="1"/>
</dbReference>
<dbReference type="PANTHER" id="PTHR22776">
    <property type="entry name" value="MARVEL-CONTAINING POTENTIAL LIPID RAFT-ASSOCIATED PROTEIN"/>
    <property type="match status" value="1"/>
</dbReference>
<dbReference type="Pfam" id="PF01284">
    <property type="entry name" value="MARVEL"/>
    <property type="match status" value="1"/>
</dbReference>
<dbReference type="PROSITE" id="PS51225">
    <property type="entry name" value="MARVEL"/>
    <property type="match status" value="1"/>
</dbReference>
<feature type="chain" id="PRO_0000186111" description="CKLF-like MARVEL transmembrane domain-containing protein 7">
    <location>
        <begin position="1"/>
        <end position="167"/>
    </location>
</feature>
<feature type="transmembrane region" description="Helical" evidence="1">
    <location>
        <begin position="35"/>
        <end position="55"/>
    </location>
</feature>
<feature type="transmembrane region" description="Helical" evidence="1">
    <location>
        <begin position="69"/>
        <end position="89"/>
    </location>
</feature>
<feature type="transmembrane region" description="Helical" evidence="1">
    <location>
        <begin position="102"/>
        <end position="122"/>
    </location>
</feature>
<feature type="transmembrane region" description="Helical" evidence="1">
    <location>
        <begin position="132"/>
        <end position="152"/>
    </location>
</feature>
<feature type="domain" description="MARVEL" evidence="2">
    <location>
        <begin position="32"/>
        <end position="158"/>
    </location>
</feature>
<feature type="splice variant" id="VSP_008267" description="In isoform 2." evidence="3">
    <location>
        <begin position="104"/>
        <end position="136"/>
    </location>
</feature>